<organism>
    <name type="scientific">Rickettsia massiliae (strain Mtu5)</name>
    <dbReference type="NCBI Taxonomy" id="416276"/>
    <lineage>
        <taxon>Bacteria</taxon>
        <taxon>Pseudomonadati</taxon>
        <taxon>Pseudomonadota</taxon>
        <taxon>Alphaproteobacteria</taxon>
        <taxon>Rickettsiales</taxon>
        <taxon>Rickettsiaceae</taxon>
        <taxon>Rickettsieae</taxon>
        <taxon>Rickettsia</taxon>
        <taxon>spotted fever group</taxon>
    </lineage>
</organism>
<name>EX7S_RICM5</name>
<dbReference type="EC" id="3.1.11.6" evidence="1"/>
<dbReference type="EMBL" id="CP000683">
    <property type="protein sequence ID" value="ABV84707.1"/>
    <property type="molecule type" value="Genomic_DNA"/>
</dbReference>
<dbReference type="RefSeq" id="WP_012152682.1">
    <property type="nucleotide sequence ID" value="NC_009900.1"/>
</dbReference>
<dbReference type="SMR" id="A8F1C1"/>
<dbReference type="KEGG" id="rms:RMA_0491"/>
<dbReference type="HOGENOM" id="CLU_145918_0_3_5"/>
<dbReference type="Proteomes" id="UP000001311">
    <property type="component" value="Chromosome"/>
</dbReference>
<dbReference type="GO" id="GO:0005829">
    <property type="term" value="C:cytosol"/>
    <property type="evidence" value="ECO:0007669"/>
    <property type="project" value="TreeGrafter"/>
</dbReference>
<dbReference type="GO" id="GO:0009318">
    <property type="term" value="C:exodeoxyribonuclease VII complex"/>
    <property type="evidence" value="ECO:0007669"/>
    <property type="project" value="InterPro"/>
</dbReference>
<dbReference type="GO" id="GO:0008855">
    <property type="term" value="F:exodeoxyribonuclease VII activity"/>
    <property type="evidence" value="ECO:0007669"/>
    <property type="project" value="UniProtKB-UniRule"/>
</dbReference>
<dbReference type="GO" id="GO:0006308">
    <property type="term" value="P:DNA catabolic process"/>
    <property type="evidence" value="ECO:0007669"/>
    <property type="project" value="UniProtKB-UniRule"/>
</dbReference>
<dbReference type="Gene3D" id="1.10.287.1040">
    <property type="entry name" value="Exonuclease VII, small subunit"/>
    <property type="match status" value="1"/>
</dbReference>
<dbReference type="HAMAP" id="MF_00337">
    <property type="entry name" value="Exonuc_7_S"/>
    <property type="match status" value="1"/>
</dbReference>
<dbReference type="InterPro" id="IPR003761">
    <property type="entry name" value="Exonuc_VII_S"/>
</dbReference>
<dbReference type="InterPro" id="IPR037004">
    <property type="entry name" value="Exonuc_VII_ssu_sf"/>
</dbReference>
<dbReference type="NCBIfam" id="NF002140">
    <property type="entry name" value="PRK00977.1-4"/>
    <property type="match status" value="1"/>
</dbReference>
<dbReference type="NCBIfam" id="TIGR01280">
    <property type="entry name" value="xseB"/>
    <property type="match status" value="1"/>
</dbReference>
<dbReference type="PANTHER" id="PTHR34137">
    <property type="entry name" value="EXODEOXYRIBONUCLEASE 7 SMALL SUBUNIT"/>
    <property type="match status" value="1"/>
</dbReference>
<dbReference type="PANTHER" id="PTHR34137:SF1">
    <property type="entry name" value="EXODEOXYRIBONUCLEASE 7 SMALL SUBUNIT"/>
    <property type="match status" value="1"/>
</dbReference>
<dbReference type="Pfam" id="PF02609">
    <property type="entry name" value="Exonuc_VII_S"/>
    <property type="match status" value="1"/>
</dbReference>
<dbReference type="PIRSF" id="PIRSF006488">
    <property type="entry name" value="Exonuc_VII_S"/>
    <property type="match status" value="1"/>
</dbReference>
<dbReference type="SUPFAM" id="SSF116842">
    <property type="entry name" value="XseB-like"/>
    <property type="match status" value="1"/>
</dbReference>
<keyword id="KW-0963">Cytoplasm</keyword>
<keyword id="KW-0269">Exonuclease</keyword>
<keyword id="KW-0378">Hydrolase</keyword>
<keyword id="KW-0540">Nuclease</keyword>
<proteinExistence type="inferred from homology"/>
<sequence length="80" mass="9117">MTNTKTLEANISFEEALKELEEIVKKIDNGQESLETAVKSFERGILLKNHCEKKLKEARLKIEKITKLANSTVVLEETEV</sequence>
<comment type="function">
    <text evidence="1">Bidirectionally degrades single-stranded DNA into large acid-insoluble oligonucleotides, which are then degraded further into small acid-soluble oligonucleotides.</text>
</comment>
<comment type="catalytic activity">
    <reaction evidence="1">
        <text>Exonucleolytic cleavage in either 5'- to 3'- or 3'- to 5'-direction to yield nucleoside 5'-phosphates.</text>
        <dbReference type="EC" id="3.1.11.6"/>
    </reaction>
</comment>
<comment type="subunit">
    <text evidence="1">Heterooligomer composed of large and small subunits.</text>
</comment>
<comment type="subcellular location">
    <subcellularLocation>
        <location evidence="1">Cytoplasm</location>
    </subcellularLocation>
</comment>
<comment type="similarity">
    <text evidence="1">Belongs to the XseB family.</text>
</comment>
<protein>
    <recommendedName>
        <fullName evidence="1">Exodeoxyribonuclease 7 small subunit</fullName>
        <ecNumber evidence="1">3.1.11.6</ecNumber>
    </recommendedName>
    <alternativeName>
        <fullName evidence="1">Exodeoxyribonuclease VII small subunit</fullName>
        <shortName evidence="1">Exonuclease VII small subunit</shortName>
    </alternativeName>
</protein>
<accession>A8F1C1</accession>
<feature type="chain" id="PRO_1000059721" description="Exodeoxyribonuclease 7 small subunit">
    <location>
        <begin position="1"/>
        <end position="80"/>
    </location>
</feature>
<reference key="1">
    <citation type="journal article" date="2007" name="Genome Res.">
        <title>Lateral gene transfer between obligate intracellular bacteria: evidence from the Rickettsia massiliae genome.</title>
        <authorList>
            <person name="Blanc G."/>
            <person name="Ogata H."/>
            <person name="Robert C."/>
            <person name="Audic S."/>
            <person name="Claverie J.-M."/>
            <person name="Raoult D."/>
        </authorList>
    </citation>
    <scope>NUCLEOTIDE SEQUENCE [LARGE SCALE GENOMIC DNA]</scope>
    <source>
        <strain>Mtu5</strain>
    </source>
</reference>
<evidence type="ECO:0000255" key="1">
    <source>
        <dbReference type="HAMAP-Rule" id="MF_00337"/>
    </source>
</evidence>
<gene>
    <name evidence="1" type="primary">xseB</name>
    <name type="ordered locus">RMA_0491</name>
</gene>